<keyword id="KW-0997">Cell inner membrane</keyword>
<keyword id="KW-1003">Cell membrane</keyword>
<keyword id="KW-0472">Membrane</keyword>
<keyword id="KW-1185">Reference proteome</keyword>
<keyword id="KW-0808">Transferase</keyword>
<keyword id="KW-0812">Transmembrane</keyword>
<keyword id="KW-1133">Transmembrane helix</keyword>
<feature type="chain" id="PRO_0000172578" description="Phosphatidylglycerol--prolipoprotein diacylglyceryl transferase">
    <location>
        <begin position="1"/>
        <end position="302"/>
    </location>
</feature>
<feature type="transmembrane region" description="Helical" evidence="1">
    <location>
        <begin position="19"/>
        <end position="39"/>
    </location>
</feature>
<feature type="transmembrane region" description="Helical" evidence="1">
    <location>
        <begin position="67"/>
        <end position="87"/>
    </location>
</feature>
<feature type="transmembrane region" description="Helical" evidence="1">
    <location>
        <begin position="108"/>
        <end position="128"/>
    </location>
</feature>
<feature type="transmembrane region" description="Helical" evidence="1">
    <location>
        <begin position="143"/>
        <end position="163"/>
    </location>
</feature>
<feature type="transmembrane region" description="Helical" evidence="1">
    <location>
        <begin position="203"/>
        <end position="223"/>
    </location>
</feature>
<feature type="transmembrane region" description="Helical" evidence="1">
    <location>
        <begin position="232"/>
        <end position="252"/>
    </location>
</feature>
<feature type="transmembrane region" description="Helical" evidence="1">
    <location>
        <begin position="264"/>
        <end position="284"/>
    </location>
</feature>
<feature type="binding site" evidence="1">
    <location>
        <position position="156"/>
    </location>
    <ligand>
        <name>a 1,2-diacyl-sn-glycero-3-phospho-(1'-sn-glycerol)</name>
        <dbReference type="ChEBI" id="CHEBI:64716"/>
    </ligand>
</feature>
<organism>
    <name type="scientific">Caulobacter vibrioides (strain ATCC 19089 / CIP 103742 / CB 15)</name>
    <name type="common">Caulobacter crescentus</name>
    <dbReference type="NCBI Taxonomy" id="190650"/>
    <lineage>
        <taxon>Bacteria</taxon>
        <taxon>Pseudomonadati</taxon>
        <taxon>Pseudomonadota</taxon>
        <taxon>Alphaproteobacteria</taxon>
        <taxon>Caulobacterales</taxon>
        <taxon>Caulobacteraceae</taxon>
        <taxon>Caulobacter</taxon>
    </lineage>
</organism>
<protein>
    <recommendedName>
        <fullName evidence="1">Phosphatidylglycerol--prolipoprotein diacylglyceryl transferase</fullName>
        <ecNumber evidence="1">2.5.1.145</ecNumber>
    </recommendedName>
</protein>
<evidence type="ECO:0000255" key="1">
    <source>
        <dbReference type="HAMAP-Rule" id="MF_01147"/>
    </source>
</evidence>
<gene>
    <name evidence="1" type="primary">lgt</name>
    <name type="ordered locus">CC_0492</name>
</gene>
<comment type="function">
    <text evidence="1">Catalyzes the transfer of the diacylglyceryl group from phosphatidylglycerol to the sulfhydryl group of the N-terminal cysteine of a prolipoprotein, the first step in the formation of mature lipoproteins.</text>
</comment>
<comment type="catalytic activity">
    <reaction evidence="1">
        <text>L-cysteinyl-[prolipoprotein] + a 1,2-diacyl-sn-glycero-3-phospho-(1'-sn-glycerol) = an S-1,2-diacyl-sn-glyceryl-L-cysteinyl-[prolipoprotein] + sn-glycerol 1-phosphate + H(+)</text>
        <dbReference type="Rhea" id="RHEA:56712"/>
        <dbReference type="Rhea" id="RHEA-COMP:14679"/>
        <dbReference type="Rhea" id="RHEA-COMP:14680"/>
        <dbReference type="ChEBI" id="CHEBI:15378"/>
        <dbReference type="ChEBI" id="CHEBI:29950"/>
        <dbReference type="ChEBI" id="CHEBI:57685"/>
        <dbReference type="ChEBI" id="CHEBI:64716"/>
        <dbReference type="ChEBI" id="CHEBI:140658"/>
        <dbReference type="EC" id="2.5.1.145"/>
    </reaction>
</comment>
<comment type="pathway">
    <text evidence="1">Protein modification; lipoprotein biosynthesis (diacylglyceryl transfer).</text>
</comment>
<comment type="subcellular location">
    <subcellularLocation>
        <location evidence="1">Cell inner membrane</location>
        <topology evidence="1">Multi-pass membrane protein</topology>
    </subcellularLocation>
</comment>
<comment type="similarity">
    <text evidence="1">Belongs to the Lgt family.</text>
</comment>
<reference key="1">
    <citation type="journal article" date="2001" name="Proc. Natl. Acad. Sci. U.S.A.">
        <title>Complete genome sequence of Caulobacter crescentus.</title>
        <authorList>
            <person name="Nierman W.C."/>
            <person name="Feldblyum T.V."/>
            <person name="Laub M.T."/>
            <person name="Paulsen I.T."/>
            <person name="Nelson K.E."/>
            <person name="Eisen J.A."/>
            <person name="Heidelberg J.F."/>
            <person name="Alley M.R.K."/>
            <person name="Ohta N."/>
            <person name="Maddock J.R."/>
            <person name="Potocka I."/>
            <person name="Nelson W.C."/>
            <person name="Newton A."/>
            <person name="Stephens C."/>
            <person name="Phadke N.D."/>
            <person name="Ely B."/>
            <person name="DeBoy R.T."/>
            <person name="Dodson R.J."/>
            <person name="Durkin A.S."/>
            <person name="Gwinn M.L."/>
            <person name="Haft D.H."/>
            <person name="Kolonay J.F."/>
            <person name="Smit J."/>
            <person name="Craven M.B."/>
            <person name="Khouri H.M."/>
            <person name="Shetty J."/>
            <person name="Berry K.J."/>
            <person name="Utterback T.R."/>
            <person name="Tran K."/>
            <person name="Wolf A.M."/>
            <person name="Vamathevan J.J."/>
            <person name="Ermolaeva M.D."/>
            <person name="White O."/>
            <person name="Salzberg S.L."/>
            <person name="Venter J.C."/>
            <person name="Shapiro L."/>
            <person name="Fraser C.M."/>
        </authorList>
    </citation>
    <scope>NUCLEOTIDE SEQUENCE [LARGE SCALE GENOMIC DNA]</scope>
    <source>
        <strain>ATCC 19089 / CIP 103742 / CB 15</strain>
    </source>
</reference>
<accession>Q9AAV1</accession>
<sequence>MIFPNIDPVVHIGPWALQFGPLALRWYALAYVAGILLGWRYALRLTRTASVWGARTPTATALQIDDLVLWITLGIIVGGRLGYFVFYMLMNDDQRAWLAAHPMDVFKIWEGGMSFHGGFLGVCAAIILFARQQKIDMLRLGDLIAPVAPIGIFFGRIANFINGELWGRVTDGPFGIIFCNETIQANHPQRICPAGPLPRHPSQLYEAALEGLVLFLILAFAIYRLKWLRRRGALVATFLLGYGLARLALENVRNPDVGMPEFPLGLTMGMMLSIPMILAGGWLLWKSLKEPIRDDAEAHEPA</sequence>
<dbReference type="EC" id="2.5.1.145" evidence="1"/>
<dbReference type="EMBL" id="AE005673">
    <property type="protein sequence ID" value="AAK22479.1"/>
    <property type="molecule type" value="Genomic_DNA"/>
</dbReference>
<dbReference type="PIR" id="C87310">
    <property type="entry name" value="C87310"/>
</dbReference>
<dbReference type="RefSeq" id="NP_419311.1">
    <property type="nucleotide sequence ID" value="NC_002696.2"/>
</dbReference>
<dbReference type="RefSeq" id="WP_010918380.1">
    <property type="nucleotide sequence ID" value="NC_002696.2"/>
</dbReference>
<dbReference type="SMR" id="Q9AAV1"/>
<dbReference type="STRING" id="190650.CC_0492"/>
<dbReference type="EnsemblBacteria" id="AAK22479">
    <property type="protein sequence ID" value="AAK22479"/>
    <property type="gene ID" value="CC_0492"/>
</dbReference>
<dbReference type="KEGG" id="ccr:CC_0492"/>
<dbReference type="PATRIC" id="fig|190650.5.peg.500"/>
<dbReference type="eggNOG" id="COG0682">
    <property type="taxonomic scope" value="Bacteria"/>
</dbReference>
<dbReference type="HOGENOM" id="CLU_013386_1_0_5"/>
<dbReference type="BioCyc" id="CAULO:CC0492-MONOMER"/>
<dbReference type="UniPathway" id="UPA00664"/>
<dbReference type="Proteomes" id="UP000001816">
    <property type="component" value="Chromosome"/>
</dbReference>
<dbReference type="GO" id="GO:0005886">
    <property type="term" value="C:plasma membrane"/>
    <property type="evidence" value="ECO:0007669"/>
    <property type="project" value="UniProtKB-SubCell"/>
</dbReference>
<dbReference type="GO" id="GO:0008961">
    <property type="term" value="F:phosphatidylglycerol-prolipoprotein diacylglyceryl transferase activity"/>
    <property type="evidence" value="ECO:0007669"/>
    <property type="project" value="UniProtKB-UniRule"/>
</dbReference>
<dbReference type="GO" id="GO:0042158">
    <property type="term" value="P:lipoprotein biosynthetic process"/>
    <property type="evidence" value="ECO:0007669"/>
    <property type="project" value="UniProtKB-UniRule"/>
</dbReference>
<dbReference type="HAMAP" id="MF_01147">
    <property type="entry name" value="Lgt"/>
    <property type="match status" value="1"/>
</dbReference>
<dbReference type="InterPro" id="IPR001640">
    <property type="entry name" value="Lgt"/>
</dbReference>
<dbReference type="NCBIfam" id="TIGR00544">
    <property type="entry name" value="lgt"/>
    <property type="match status" value="1"/>
</dbReference>
<dbReference type="PANTHER" id="PTHR30589:SF0">
    <property type="entry name" value="PHOSPHATIDYLGLYCEROL--PROLIPOPROTEIN DIACYLGLYCERYL TRANSFERASE"/>
    <property type="match status" value="1"/>
</dbReference>
<dbReference type="PANTHER" id="PTHR30589">
    <property type="entry name" value="PROLIPOPROTEIN DIACYLGLYCERYL TRANSFERASE"/>
    <property type="match status" value="1"/>
</dbReference>
<dbReference type="Pfam" id="PF01790">
    <property type="entry name" value="LGT"/>
    <property type="match status" value="1"/>
</dbReference>
<dbReference type="PROSITE" id="PS01311">
    <property type="entry name" value="LGT"/>
    <property type="match status" value="1"/>
</dbReference>
<name>LGT_CAUVC</name>
<proteinExistence type="inferred from homology"/>